<name>PG172_MONPV</name>
<gene>
    <name type="primary">OPG172</name>
    <name type="ORF">MPXVgp153</name>
</gene>
<dbReference type="EMBL" id="MT903340">
    <property type="protein sequence ID" value="QNP13023.1"/>
    <property type="molecule type" value="Genomic_DNA"/>
</dbReference>
<dbReference type="RefSeq" id="YP_010377150.1">
    <property type="nucleotide sequence ID" value="NC_063383.1"/>
</dbReference>
<dbReference type="GeneID" id="72551564"/>
<dbReference type="Proteomes" id="UP000516359">
    <property type="component" value="Genome"/>
</dbReference>
<dbReference type="GO" id="GO:0033644">
    <property type="term" value="C:host cell membrane"/>
    <property type="evidence" value="ECO:0007669"/>
    <property type="project" value="UniProtKB-SubCell"/>
</dbReference>
<dbReference type="GO" id="GO:0044228">
    <property type="term" value="C:host cell surface"/>
    <property type="evidence" value="ECO:0007669"/>
    <property type="project" value="UniProtKB-SubCell"/>
</dbReference>
<dbReference type="GO" id="GO:0016020">
    <property type="term" value="C:membrane"/>
    <property type="evidence" value="ECO:0007669"/>
    <property type="project" value="UniProtKB-KW"/>
</dbReference>
<dbReference type="InterPro" id="IPR009487">
    <property type="entry name" value="Orthopox_A43R"/>
</dbReference>
<dbReference type="Pfam" id="PF06517">
    <property type="entry name" value="Orthopox_A43R"/>
    <property type="match status" value="1"/>
</dbReference>
<proteinExistence type="evidence at transcript level"/>
<comment type="subcellular location">
    <subcellularLocation>
        <location evidence="1">Host membrane</location>
        <topology evidence="1">Single-pass type I membrane protein</topology>
    </subcellularLocation>
    <subcellularLocation>
        <location evidence="1">Host cell surface</location>
    </subcellularLocation>
</comment>
<comment type="induction">
    <text>Expressed in the late phase of the viral replicative cycle.</text>
</comment>
<comment type="similarity">
    <text evidence="3">Belongs to the orthopoxvirus OPG172 protein family.</text>
</comment>
<sequence>MMMKWIISILTMSIMPVLTYSSSIFRFHSEDIELCYGNLYFDRIYNNVVNIKYIPEHIPYRYNFINRTFSVDELDDNVFFTHGYFLKHKYGCSLNPSLIVSLSGNLKYNDIQCSVNVSCLIKNLATSTSTILTSKHKTYSLYRSMCIAIIGYDSIIWYKYINDRYNDIYDFTAICMLIASTLIVIIYVFKKIKMNS</sequence>
<accession>A0A7H0DNE0</accession>
<organismHost>
    <name type="scientific">Cynomys gunnisoni</name>
    <name type="common">Gunnison's prairie dog</name>
    <name type="synonym">Spermophilus gunnisoni</name>
    <dbReference type="NCBI Taxonomy" id="45479"/>
</organismHost>
<organismHost>
    <name type="scientific">Cynomys leucurus</name>
    <name type="common">White-tailed prairie dog</name>
    <dbReference type="NCBI Taxonomy" id="99825"/>
</organismHost>
<organismHost>
    <name type="scientific">Cynomys ludovicianus</name>
    <name type="common">Black-tailed prairie dog</name>
    <dbReference type="NCBI Taxonomy" id="45480"/>
</organismHost>
<organismHost>
    <name type="scientific">Cynomys mexicanus</name>
    <name type="common">Mexican prairie dog</name>
    <dbReference type="NCBI Taxonomy" id="99826"/>
</organismHost>
<organismHost>
    <name type="scientific">Cynomys parvidens</name>
    <name type="common">Utah prairie dog</name>
    <dbReference type="NCBI Taxonomy" id="99827"/>
</organismHost>
<organismHost>
    <name type="scientific">Gliridae</name>
    <name type="common">dormice</name>
    <dbReference type="NCBI Taxonomy" id="30650"/>
</organismHost>
<organismHost>
    <name type="scientific">Heliosciurus ruwenzorii</name>
    <name type="common">Ruwenzori sun squirrel</name>
    <dbReference type="NCBI Taxonomy" id="226685"/>
</organismHost>
<organismHost>
    <name type="scientific">Homo sapiens</name>
    <name type="common">Human</name>
    <dbReference type="NCBI Taxonomy" id="9606"/>
</organismHost>
<organismHost>
    <name type="scientific">Mus musculus</name>
    <name type="common">Mouse</name>
    <dbReference type="NCBI Taxonomy" id="10090"/>
</organismHost>
<keyword id="KW-0325">Glycoprotein</keyword>
<keyword id="KW-1043">Host membrane</keyword>
<keyword id="KW-0472">Membrane</keyword>
<keyword id="KW-1185">Reference proteome</keyword>
<keyword id="KW-0732">Signal</keyword>
<keyword id="KW-0812">Transmembrane</keyword>
<keyword id="KW-1133">Transmembrane helix</keyword>
<feature type="signal peptide" evidence="2">
    <location>
        <begin position="1"/>
        <end position="21"/>
    </location>
</feature>
<feature type="chain" id="PRO_0000457595" description="Protein OPG172" evidence="2">
    <location>
        <begin position="22"/>
        <end position="196"/>
    </location>
</feature>
<feature type="topological domain" description="Extracellular">
    <location>
        <begin position="22"/>
        <end position="167"/>
    </location>
</feature>
<feature type="transmembrane region" description="Helical" evidence="2">
    <location>
        <begin position="168"/>
        <end position="188"/>
    </location>
</feature>
<feature type="topological domain" description="Cytoplasmic">
    <location>
        <begin position="189"/>
        <end position="196"/>
    </location>
</feature>
<feature type="glycosylation site" description="N-linked (GlcNAc...) asparagine; by host" evidence="1">
    <location>
        <position position="66"/>
    </location>
</feature>
<feature type="glycosylation site" description="N-linked (GlcNAc...) asparagine; by host" evidence="1">
    <location>
        <position position="116"/>
    </location>
</feature>
<protein>
    <recommendedName>
        <fullName>Protein OPG172</fullName>
    </recommendedName>
</protein>
<reference key="1">
    <citation type="journal article" date="2022" name="J. Infect. Dis.">
        <title>Exportation of Monkeypox virus from the African continent.</title>
        <authorList>
            <person name="Mauldin M.R."/>
            <person name="McCollum A.M."/>
            <person name="Nakazawa Y.J."/>
            <person name="Mandra A."/>
            <person name="Whitehouse E.R."/>
            <person name="Davidson W."/>
            <person name="Zhao H."/>
            <person name="Gao J."/>
            <person name="Li Y."/>
            <person name="Doty J."/>
            <person name="Yinka-Ogunleye A."/>
            <person name="Akinpelu A."/>
            <person name="Aruna O."/>
            <person name="Naidoo D."/>
            <person name="Lewandowski K."/>
            <person name="Afrough B."/>
            <person name="Graham V."/>
            <person name="Aarons E."/>
            <person name="Hewson R."/>
            <person name="Vipond R."/>
            <person name="Dunning J."/>
            <person name="Chand M."/>
            <person name="Brown C."/>
            <person name="Cohen-Gihon I."/>
            <person name="Erez N."/>
            <person name="Shifman O."/>
            <person name="Israeli O."/>
            <person name="Sharon M."/>
            <person name="Schwartz E."/>
            <person name="Beth-Din A."/>
            <person name="Zvi A."/>
            <person name="Mak T.M."/>
            <person name="Ng Y.K."/>
            <person name="Cui L."/>
            <person name="Lin R.T.P."/>
            <person name="Olson V.A."/>
            <person name="Brooks T."/>
            <person name="Paran N."/>
            <person name="Ihekweazu C."/>
            <person name="Reynolds M.G."/>
        </authorList>
    </citation>
    <scope>NUCLEOTIDE SEQUENCE [LARGE SCALE GENOMIC DNA]</scope>
    <source>
        <strain>MPXV-M5312_HM12_Rivers</strain>
    </source>
</reference>
<evidence type="ECO:0000250" key="1">
    <source>
        <dbReference type="UniProtKB" id="P26671"/>
    </source>
</evidence>
<evidence type="ECO:0000255" key="2"/>
<evidence type="ECO:0000305" key="3"/>
<organism>
    <name type="scientific">Monkeypox virus</name>
    <dbReference type="NCBI Taxonomy" id="10244"/>
    <lineage>
        <taxon>Viruses</taxon>
        <taxon>Varidnaviria</taxon>
        <taxon>Bamfordvirae</taxon>
        <taxon>Nucleocytoviricota</taxon>
        <taxon>Pokkesviricetes</taxon>
        <taxon>Chitovirales</taxon>
        <taxon>Poxviridae</taxon>
        <taxon>Chordopoxvirinae</taxon>
        <taxon>Orthopoxvirus</taxon>
    </lineage>
</organism>